<accession>F4JRF4</accession>
<accession>Q9SU12</accession>
<evidence type="ECO:0000250" key="1"/>
<evidence type="ECO:0000250" key="2">
    <source>
        <dbReference type="UniProtKB" id="P83847"/>
    </source>
</evidence>
<evidence type="ECO:0000256" key="3">
    <source>
        <dbReference type="SAM" id="MobiDB-lite"/>
    </source>
</evidence>
<evidence type="ECO:0000305" key="4"/>
<sequence>MACLLRVALNPTFERSTVASQRQNPKTILSFHCKVSSFKTKTMSQSFAPREKLMRKCREKKEAEREAEREAEREAEEEEKAEEAEAEADKEEAEEESEEEEEEEEEEAEAEEEALGGDIEDLFSENETQKIRMGLLDWYDVNKRDLPWRNRRSESEKERRAYEVWVSEIMLQQTRVQTVMKYYKRWMQKWPTIYDLGQASLENLIVSRSRELSFLRGNEKKEVNEMWAGLGYYRRARFLLEGAKMVVAGTEGFPNQASSLMKVKGIGQYTAGAIASIAFNEAVPVVDGNVIRVLARLKAISANPKDRLTARNFWKLAAQLVDPSRPGDFNQSLMELGATLCTVSKPSCSSCPVSSQCRAFSLSEENRTISVTDYPTKVIKAKPRHDFCCVCVLEIHNLERNQSGGRFVLVKRPEQGLLAGLWEFPSVILNEEADSATRRNAINVYLKEAFRFHVELKKACTIVSREELGEFVHIFTHIRRKVYVELLVVQLTGGTEDLFKGQAKDTLTWKCVSSDVLSTLGLTSAVRKVPPFRLQHIKRLSLDVMVEKEQILECRCIQWLKHTSKAYLFLMSHQIEQPYRGNENSHDLLLTLFFMLLSFYSSCLALGIKFGDLGLKLNSLVSTEKSDGDV</sequence>
<reference key="1">
    <citation type="journal article" date="1999" name="Nature">
        <title>Sequence and analysis of chromosome 4 of the plant Arabidopsis thaliana.</title>
        <authorList>
            <person name="Mayer K.F.X."/>
            <person name="Schueller C."/>
            <person name="Wambutt R."/>
            <person name="Murphy G."/>
            <person name="Volckaert G."/>
            <person name="Pohl T."/>
            <person name="Duesterhoeft A."/>
            <person name="Stiekema W."/>
            <person name="Entian K.-D."/>
            <person name="Terryn N."/>
            <person name="Harris B."/>
            <person name="Ansorge W."/>
            <person name="Brandt P."/>
            <person name="Grivell L.A."/>
            <person name="Rieger M."/>
            <person name="Weichselgartner M."/>
            <person name="de Simone V."/>
            <person name="Obermaier B."/>
            <person name="Mache R."/>
            <person name="Mueller M."/>
            <person name="Kreis M."/>
            <person name="Delseny M."/>
            <person name="Puigdomenech P."/>
            <person name="Watson M."/>
            <person name="Schmidtheini T."/>
            <person name="Reichert B."/>
            <person name="Portetelle D."/>
            <person name="Perez-Alonso M."/>
            <person name="Boutry M."/>
            <person name="Bancroft I."/>
            <person name="Vos P."/>
            <person name="Hoheisel J."/>
            <person name="Zimmermann W."/>
            <person name="Wedler H."/>
            <person name="Ridley P."/>
            <person name="Langham S.-A."/>
            <person name="McCullagh B."/>
            <person name="Bilham L."/>
            <person name="Robben J."/>
            <person name="van der Schueren J."/>
            <person name="Grymonprez B."/>
            <person name="Chuang Y.-J."/>
            <person name="Vandenbussche F."/>
            <person name="Braeken M."/>
            <person name="Weltjens I."/>
            <person name="Voet M."/>
            <person name="Bastiaens I."/>
            <person name="Aert R."/>
            <person name="Defoor E."/>
            <person name="Weitzenegger T."/>
            <person name="Bothe G."/>
            <person name="Ramsperger U."/>
            <person name="Hilbert H."/>
            <person name="Braun M."/>
            <person name="Holzer E."/>
            <person name="Brandt A."/>
            <person name="Peters S."/>
            <person name="van Staveren M."/>
            <person name="Dirkse W."/>
            <person name="Mooijman P."/>
            <person name="Klein Lankhorst R."/>
            <person name="Rose M."/>
            <person name="Hauf J."/>
            <person name="Koetter P."/>
            <person name="Berneiser S."/>
            <person name="Hempel S."/>
            <person name="Feldpausch M."/>
            <person name="Lamberth S."/>
            <person name="Van den Daele H."/>
            <person name="De Keyser A."/>
            <person name="Buysshaert C."/>
            <person name="Gielen J."/>
            <person name="Villarroel R."/>
            <person name="De Clercq R."/>
            <person name="van Montagu M."/>
            <person name="Rogers J."/>
            <person name="Cronin A."/>
            <person name="Quail M.A."/>
            <person name="Bray-Allen S."/>
            <person name="Clark L."/>
            <person name="Doggett J."/>
            <person name="Hall S."/>
            <person name="Kay M."/>
            <person name="Lennard N."/>
            <person name="McLay K."/>
            <person name="Mayes R."/>
            <person name="Pettett A."/>
            <person name="Rajandream M.A."/>
            <person name="Lyne M."/>
            <person name="Benes V."/>
            <person name="Rechmann S."/>
            <person name="Borkova D."/>
            <person name="Bloecker H."/>
            <person name="Scharfe M."/>
            <person name="Grimm M."/>
            <person name="Loehnert T.-H."/>
            <person name="Dose S."/>
            <person name="de Haan M."/>
            <person name="Maarse A.C."/>
            <person name="Schaefer M."/>
            <person name="Mueller-Auer S."/>
            <person name="Gabel C."/>
            <person name="Fuchs M."/>
            <person name="Fartmann B."/>
            <person name="Granderath K."/>
            <person name="Dauner D."/>
            <person name="Herzl A."/>
            <person name="Neumann S."/>
            <person name="Argiriou A."/>
            <person name="Vitale D."/>
            <person name="Liguori R."/>
            <person name="Piravandi E."/>
            <person name="Massenet O."/>
            <person name="Quigley F."/>
            <person name="Clabauld G."/>
            <person name="Muendlein A."/>
            <person name="Felber R."/>
            <person name="Schnabl S."/>
            <person name="Hiller R."/>
            <person name="Schmidt W."/>
            <person name="Lecharny A."/>
            <person name="Aubourg S."/>
            <person name="Chefdor F."/>
            <person name="Cooke R."/>
            <person name="Berger C."/>
            <person name="Monfort A."/>
            <person name="Casacuberta E."/>
            <person name="Gibbons T."/>
            <person name="Weber N."/>
            <person name="Vandenbol M."/>
            <person name="Bargues M."/>
            <person name="Terol J."/>
            <person name="Torres A."/>
            <person name="Perez-Perez A."/>
            <person name="Purnelle B."/>
            <person name="Bent E."/>
            <person name="Johnson S."/>
            <person name="Tacon D."/>
            <person name="Jesse T."/>
            <person name="Heijnen L."/>
            <person name="Schwarz S."/>
            <person name="Scholler P."/>
            <person name="Heber S."/>
            <person name="Francs P."/>
            <person name="Bielke C."/>
            <person name="Frishman D."/>
            <person name="Haase D."/>
            <person name="Lemcke K."/>
            <person name="Mewes H.-W."/>
            <person name="Stocker S."/>
            <person name="Zaccaria P."/>
            <person name="Bevan M."/>
            <person name="Wilson R.K."/>
            <person name="de la Bastide M."/>
            <person name="Habermann K."/>
            <person name="Parnell L."/>
            <person name="Dedhia N."/>
            <person name="Gnoj L."/>
            <person name="Schutz K."/>
            <person name="Huang E."/>
            <person name="Spiegel L."/>
            <person name="Sekhon M."/>
            <person name="Murray J."/>
            <person name="Sheet P."/>
            <person name="Cordes M."/>
            <person name="Abu-Threideh J."/>
            <person name="Stoneking T."/>
            <person name="Kalicki J."/>
            <person name="Graves T."/>
            <person name="Harmon G."/>
            <person name="Edwards J."/>
            <person name="Latreille P."/>
            <person name="Courtney L."/>
            <person name="Cloud J."/>
            <person name="Abbott A."/>
            <person name="Scott K."/>
            <person name="Johnson D."/>
            <person name="Minx P."/>
            <person name="Bentley D."/>
            <person name="Fulton B."/>
            <person name="Miller N."/>
            <person name="Greco T."/>
            <person name="Kemp K."/>
            <person name="Kramer J."/>
            <person name="Fulton L."/>
            <person name="Mardis E."/>
            <person name="Dante M."/>
            <person name="Pepin K."/>
            <person name="Hillier L.W."/>
            <person name="Nelson J."/>
            <person name="Spieth J."/>
            <person name="Ryan E."/>
            <person name="Andrews S."/>
            <person name="Geisel C."/>
            <person name="Layman D."/>
            <person name="Du H."/>
            <person name="Ali J."/>
            <person name="Berghoff A."/>
            <person name="Jones K."/>
            <person name="Drone K."/>
            <person name="Cotton M."/>
            <person name="Joshu C."/>
            <person name="Antonoiu B."/>
            <person name="Zidanic M."/>
            <person name="Strong C."/>
            <person name="Sun H."/>
            <person name="Lamar B."/>
            <person name="Yordan C."/>
            <person name="Ma P."/>
            <person name="Zhong J."/>
            <person name="Preston R."/>
            <person name="Vil D."/>
            <person name="Shekher M."/>
            <person name="Matero A."/>
            <person name="Shah R."/>
            <person name="Swaby I.K."/>
            <person name="O'Shaughnessy A."/>
            <person name="Rodriguez M."/>
            <person name="Hoffman J."/>
            <person name="Till S."/>
            <person name="Granat S."/>
            <person name="Shohdy N."/>
            <person name="Hasegawa A."/>
            <person name="Hameed A."/>
            <person name="Lodhi M."/>
            <person name="Johnson A."/>
            <person name="Chen E."/>
            <person name="Marra M.A."/>
            <person name="Martienssen R."/>
            <person name="McCombie W.R."/>
        </authorList>
    </citation>
    <scope>NUCLEOTIDE SEQUENCE [LARGE SCALE GENOMIC DNA]</scope>
    <source>
        <strain>cv. Columbia</strain>
    </source>
</reference>
<reference key="2">
    <citation type="journal article" date="2017" name="Plant J.">
        <title>Araport11: a complete reannotation of the Arabidopsis thaliana reference genome.</title>
        <authorList>
            <person name="Cheng C.Y."/>
            <person name="Krishnakumar V."/>
            <person name="Chan A.P."/>
            <person name="Thibaud-Nissen F."/>
            <person name="Schobel S."/>
            <person name="Town C.D."/>
        </authorList>
    </citation>
    <scope>GENOME REANNOTATION</scope>
    <source>
        <strain>cv. Columbia</strain>
    </source>
</reference>
<keyword id="KW-0004">4Fe-4S</keyword>
<keyword id="KW-0227">DNA damage</keyword>
<keyword id="KW-0234">DNA repair</keyword>
<keyword id="KW-0326">Glycosidase</keyword>
<keyword id="KW-0378">Hydrolase</keyword>
<keyword id="KW-0408">Iron</keyword>
<keyword id="KW-0411">Iron-sulfur</keyword>
<keyword id="KW-0479">Metal-binding</keyword>
<keyword id="KW-0539">Nucleus</keyword>
<keyword id="KW-1185">Reference proteome</keyword>
<comment type="function">
    <text evidence="1">Involved in oxidative DNA damage repair. Initiates repair of A*oxoG to C*G by removing the inappropriately paired adenine base from the DNA backbone. Possesses both adenine and 2-OH-A DNA glycosylase activities.</text>
</comment>
<comment type="catalytic activity">
    <reaction>
        <text>Hydrolyzes free adenine bases from 7,8-dihydro-8-oxoguanine:adenine mismatched double-stranded DNA, leaving an apurinic site.</text>
        <dbReference type="EC" id="3.2.2.31"/>
    </reaction>
</comment>
<comment type="cofactor">
    <cofactor evidence="1">
        <name>[4Fe-4S] cluster</name>
        <dbReference type="ChEBI" id="CHEBI:49883"/>
    </cofactor>
    <text evidence="1">Binds 1 [4Fe-4S] cluster. The cluster does not appear to play a role in catalysis, but is probably involved in the proper positioning of the enzyme along the DNA strand.</text>
</comment>
<comment type="subcellular location">
    <subcellularLocation>
        <location evidence="1">Nucleus</location>
    </subcellularLocation>
</comment>
<comment type="similarity">
    <text evidence="4">Belongs to the Nth/MutY family.</text>
</comment>
<comment type="sequence caution" evidence="4">
    <conflict type="erroneous gene model prediction">
        <sequence resource="EMBL-CDS" id="CAB40991"/>
    </conflict>
</comment>
<comment type="sequence caution" evidence="4">
    <conflict type="erroneous gene model prediction">
        <sequence resource="EMBL-CDS" id="CAB78316"/>
    </conflict>
</comment>
<name>MUTYH_ARATH</name>
<protein>
    <recommendedName>
        <fullName>Adenine DNA glycosylase</fullName>
        <ecNumber>3.2.2.31</ecNumber>
    </recommendedName>
    <alternativeName>
        <fullName>MutY homolog</fullName>
        <shortName>AtMYH</shortName>
    </alternativeName>
</protein>
<proteinExistence type="inferred from homology"/>
<gene>
    <name type="primary">MYH</name>
    <name type="ordered locus">At4g12740</name>
    <name type="ORF">T20K18.90</name>
</gene>
<organism>
    <name type="scientific">Arabidopsis thaliana</name>
    <name type="common">Mouse-ear cress</name>
    <dbReference type="NCBI Taxonomy" id="3702"/>
    <lineage>
        <taxon>Eukaryota</taxon>
        <taxon>Viridiplantae</taxon>
        <taxon>Streptophyta</taxon>
        <taxon>Embryophyta</taxon>
        <taxon>Tracheophyta</taxon>
        <taxon>Spermatophyta</taxon>
        <taxon>Magnoliopsida</taxon>
        <taxon>eudicotyledons</taxon>
        <taxon>Gunneridae</taxon>
        <taxon>Pentapetalae</taxon>
        <taxon>rosids</taxon>
        <taxon>malvids</taxon>
        <taxon>Brassicales</taxon>
        <taxon>Brassicaceae</taxon>
        <taxon>Camelineae</taxon>
        <taxon>Arabidopsis</taxon>
    </lineage>
</organism>
<dbReference type="EC" id="3.2.2.31"/>
<dbReference type="EMBL" id="AL049640">
    <property type="protein sequence ID" value="CAB40991.1"/>
    <property type="status" value="ALT_SEQ"/>
    <property type="molecule type" value="Genomic_DNA"/>
</dbReference>
<dbReference type="EMBL" id="AL161534">
    <property type="protein sequence ID" value="CAB78316.1"/>
    <property type="status" value="ALT_SEQ"/>
    <property type="molecule type" value="Genomic_DNA"/>
</dbReference>
<dbReference type="EMBL" id="CP002687">
    <property type="protein sequence ID" value="AEE83174.1"/>
    <property type="molecule type" value="Genomic_DNA"/>
</dbReference>
<dbReference type="PIR" id="T06632">
    <property type="entry name" value="T06632"/>
</dbReference>
<dbReference type="RefSeq" id="NP_193010.2">
    <property type="nucleotide sequence ID" value="NM_117343.2"/>
</dbReference>
<dbReference type="SMR" id="F4JRF4"/>
<dbReference type="FunCoup" id="F4JRF4">
    <property type="interactions" value="1241"/>
</dbReference>
<dbReference type="STRING" id="3702.F4JRF4"/>
<dbReference type="PaxDb" id="3702-AT4G12740.1"/>
<dbReference type="EnsemblPlants" id="AT4G12740.1">
    <property type="protein sequence ID" value="AT4G12740.1"/>
    <property type="gene ID" value="AT4G12740"/>
</dbReference>
<dbReference type="GeneID" id="826886"/>
<dbReference type="Gramene" id="AT4G12740.1">
    <property type="protein sequence ID" value="AT4G12740.1"/>
    <property type="gene ID" value="AT4G12740"/>
</dbReference>
<dbReference type="KEGG" id="ath:AT4G12740"/>
<dbReference type="Araport" id="AT4G12740"/>
<dbReference type="TAIR" id="AT4G12740"/>
<dbReference type="eggNOG" id="KOG2457">
    <property type="taxonomic scope" value="Eukaryota"/>
</dbReference>
<dbReference type="HOGENOM" id="CLU_012862_0_0_1"/>
<dbReference type="InParanoid" id="F4JRF4"/>
<dbReference type="PRO" id="PR:F4JRF4"/>
<dbReference type="Proteomes" id="UP000006548">
    <property type="component" value="Chromosome 4"/>
</dbReference>
<dbReference type="ExpressionAtlas" id="F4JRF4">
    <property type="expression patterns" value="baseline and differential"/>
</dbReference>
<dbReference type="GO" id="GO:0005634">
    <property type="term" value="C:nucleus"/>
    <property type="evidence" value="ECO:0007669"/>
    <property type="project" value="UniProtKB-SubCell"/>
</dbReference>
<dbReference type="GO" id="GO:0051539">
    <property type="term" value="F:4 iron, 4 sulfur cluster binding"/>
    <property type="evidence" value="ECO:0007669"/>
    <property type="project" value="UniProtKB-KW"/>
</dbReference>
<dbReference type="GO" id="GO:0046872">
    <property type="term" value="F:metal ion binding"/>
    <property type="evidence" value="ECO:0007669"/>
    <property type="project" value="UniProtKB-KW"/>
</dbReference>
<dbReference type="GO" id="GO:0000701">
    <property type="term" value="F:purine-specific mismatch base pair DNA N-glycosylase activity"/>
    <property type="evidence" value="ECO:0007669"/>
    <property type="project" value="UniProtKB-EC"/>
</dbReference>
<dbReference type="GO" id="GO:0006284">
    <property type="term" value="P:base-excision repair"/>
    <property type="evidence" value="ECO:0007669"/>
    <property type="project" value="InterPro"/>
</dbReference>
<dbReference type="CDD" id="cd00056">
    <property type="entry name" value="ENDO3c"/>
    <property type="match status" value="1"/>
</dbReference>
<dbReference type="CDD" id="cd03431">
    <property type="entry name" value="NUDIX_DNA_Glycosylase_C-MutY"/>
    <property type="match status" value="1"/>
</dbReference>
<dbReference type="FunFam" id="1.10.1670.10:FF:000002">
    <property type="entry name" value="Adenine DNA glycosylase"/>
    <property type="match status" value="1"/>
</dbReference>
<dbReference type="FunFam" id="3.90.79.10:FF:000026">
    <property type="entry name" value="Adenine DNA glycosylase"/>
    <property type="match status" value="1"/>
</dbReference>
<dbReference type="Gene3D" id="1.10.1670.10">
    <property type="entry name" value="Helix-hairpin-Helix base-excision DNA repair enzymes (C-terminal)"/>
    <property type="match status" value="1"/>
</dbReference>
<dbReference type="Gene3D" id="1.10.340.30">
    <property type="entry name" value="Hypothetical protein, domain 2"/>
    <property type="match status" value="1"/>
</dbReference>
<dbReference type="Gene3D" id="3.90.79.10">
    <property type="entry name" value="Nucleoside Triphosphate Pyrophosphohydrolase"/>
    <property type="match status" value="1"/>
</dbReference>
<dbReference type="InterPro" id="IPR011257">
    <property type="entry name" value="DNA_glycosylase"/>
</dbReference>
<dbReference type="InterPro" id="IPR003265">
    <property type="entry name" value="HhH-GPD_domain"/>
</dbReference>
<dbReference type="InterPro" id="IPR023170">
    <property type="entry name" value="HhH_base_excis_C"/>
</dbReference>
<dbReference type="InterPro" id="IPR044298">
    <property type="entry name" value="MIG/MutY"/>
</dbReference>
<dbReference type="InterPro" id="IPR029119">
    <property type="entry name" value="MutY_C"/>
</dbReference>
<dbReference type="InterPro" id="IPR015797">
    <property type="entry name" value="NUDIX_hydrolase-like_dom_sf"/>
</dbReference>
<dbReference type="PANTHER" id="PTHR42944">
    <property type="entry name" value="ADENINE DNA GLYCOSYLASE"/>
    <property type="match status" value="1"/>
</dbReference>
<dbReference type="PANTHER" id="PTHR42944:SF1">
    <property type="entry name" value="ADENINE DNA GLYCOSYLASE"/>
    <property type="match status" value="1"/>
</dbReference>
<dbReference type="Pfam" id="PF00730">
    <property type="entry name" value="HhH-GPD"/>
    <property type="match status" value="1"/>
</dbReference>
<dbReference type="Pfam" id="PF14815">
    <property type="entry name" value="NUDIX_4"/>
    <property type="match status" value="1"/>
</dbReference>
<dbReference type="SMART" id="SM00478">
    <property type="entry name" value="ENDO3c"/>
    <property type="match status" value="1"/>
</dbReference>
<dbReference type="SUPFAM" id="SSF48150">
    <property type="entry name" value="DNA-glycosylase"/>
    <property type="match status" value="1"/>
</dbReference>
<dbReference type="SUPFAM" id="SSF55811">
    <property type="entry name" value="Nudix"/>
    <property type="match status" value="1"/>
</dbReference>
<feature type="chain" id="PRO_0000421263" description="Adenine DNA glycosylase">
    <location>
        <begin position="1"/>
        <end position="630"/>
    </location>
</feature>
<feature type="domain" description="Nudix hydrolase">
    <location>
        <begin position="383"/>
        <end position="536"/>
    </location>
</feature>
<feature type="region of interest" description="Disordered" evidence="3">
    <location>
        <begin position="54"/>
        <end position="123"/>
    </location>
</feature>
<feature type="short sequence motif" description="Nudix box">
    <location>
        <begin position="427"/>
        <end position="451"/>
    </location>
</feature>
<feature type="compositionally biased region" description="Basic and acidic residues" evidence="3">
    <location>
        <begin position="54"/>
        <end position="72"/>
    </location>
</feature>
<feature type="compositionally biased region" description="Acidic residues" evidence="3">
    <location>
        <begin position="73"/>
        <end position="123"/>
    </location>
</feature>
<feature type="active site" description="Proton donor/acceptor" evidence="2">
    <location>
        <position position="168"/>
    </location>
</feature>
<feature type="binding site" evidence="1">
    <location>
        <position position="341"/>
    </location>
    <ligand>
        <name>[4Fe-4S] cluster</name>
        <dbReference type="ChEBI" id="CHEBI:49883"/>
    </ligand>
</feature>
<feature type="binding site" evidence="1">
    <location>
        <position position="348"/>
    </location>
    <ligand>
        <name>[4Fe-4S] cluster</name>
        <dbReference type="ChEBI" id="CHEBI:49883"/>
    </ligand>
</feature>
<feature type="binding site" evidence="1">
    <location>
        <position position="351"/>
    </location>
    <ligand>
        <name>[4Fe-4S] cluster</name>
        <dbReference type="ChEBI" id="CHEBI:49883"/>
    </ligand>
</feature>
<feature type="binding site" evidence="1">
    <location>
        <position position="357"/>
    </location>
    <ligand>
        <name>[4Fe-4S] cluster</name>
        <dbReference type="ChEBI" id="CHEBI:49883"/>
    </ligand>
</feature>
<feature type="site" description="Transition state stabilizer" evidence="2">
    <location>
        <position position="287"/>
    </location>
</feature>